<gene>
    <name evidence="1" type="primary">trpF</name>
    <name type="ordered locus">Teth514_1865</name>
</gene>
<accession>B0K2U0</accession>
<dbReference type="EC" id="5.3.1.24" evidence="1"/>
<dbReference type="EMBL" id="CP000923">
    <property type="protein sequence ID" value="ABY93145.1"/>
    <property type="molecule type" value="Genomic_DNA"/>
</dbReference>
<dbReference type="RefSeq" id="WP_009052484.1">
    <property type="nucleotide sequence ID" value="NC_010320.1"/>
</dbReference>
<dbReference type="SMR" id="B0K2U0"/>
<dbReference type="KEGG" id="tex:Teth514_1865"/>
<dbReference type="HOGENOM" id="CLU_076364_1_0_9"/>
<dbReference type="UniPathway" id="UPA00035">
    <property type="reaction ID" value="UER00042"/>
</dbReference>
<dbReference type="Proteomes" id="UP000002155">
    <property type="component" value="Chromosome"/>
</dbReference>
<dbReference type="GO" id="GO:0004640">
    <property type="term" value="F:phosphoribosylanthranilate isomerase activity"/>
    <property type="evidence" value="ECO:0007669"/>
    <property type="project" value="UniProtKB-UniRule"/>
</dbReference>
<dbReference type="GO" id="GO:0000162">
    <property type="term" value="P:L-tryptophan biosynthetic process"/>
    <property type="evidence" value="ECO:0007669"/>
    <property type="project" value="UniProtKB-UniRule"/>
</dbReference>
<dbReference type="CDD" id="cd00405">
    <property type="entry name" value="PRAI"/>
    <property type="match status" value="1"/>
</dbReference>
<dbReference type="FunFam" id="3.20.20.70:FF:000075">
    <property type="entry name" value="Tryptophan biosynthesis protein TRP1"/>
    <property type="match status" value="1"/>
</dbReference>
<dbReference type="Gene3D" id="3.20.20.70">
    <property type="entry name" value="Aldolase class I"/>
    <property type="match status" value="1"/>
</dbReference>
<dbReference type="HAMAP" id="MF_00135">
    <property type="entry name" value="PRAI"/>
    <property type="match status" value="1"/>
</dbReference>
<dbReference type="InterPro" id="IPR013785">
    <property type="entry name" value="Aldolase_TIM"/>
</dbReference>
<dbReference type="InterPro" id="IPR001240">
    <property type="entry name" value="PRAI_dom"/>
</dbReference>
<dbReference type="InterPro" id="IPR011060">
    <property type="entry name" value="RibuloseP-bd_barrel"/>
</dbReference>
<dbReference type="InterPro" id="IPR044643">
    <property type="entry name" value="TrpF_fam"/>
</dbReference>
<dbReference type="PANTHER" id="PTHR42894">
    <property type="entry name" value="N-(5'-PHOSPHORIBOSYL)ANTHRANILATE ISOMERASE"/>
    <property type="match status" value="1"/>
</dbReference>
<dbReference type="PANTHER" id="PTHR42894:SF1">
    <property type="entry name" value="N-(5'-PHOSPHORIBOSYL)ANTHRANILATE ISOMERASE"/>
    <property type="match status" value="1"/>
</dbReference>
<dbReference type="Pfam" id="PF00697">
    <property type="entry name" value="PRAI"/>
    <property type="match status" value="1"/>
</dbReference>
<dbReference type="SUPFAM" id="SSF51366">
    <property type="entry name" value="Ribulose-phoshate binding barrel"/>
    <property type="match status" value="1"/>
</dbReference>
<protein>
    <recommendedName>
        <fullName evidence="1">N-(5'-phosphoribosyl)anthranilate isomerase</fullName>
        <shortName evidence="1">PRAI</shortName>
        <ecNumber evidence="1">5.3.1.24</ecNumber>
    </recommendedName>
</protein>
<keyword id="KW-0028">Amino-acid biosynthesis</keyword>
<keyword id="KW-0057">Aromatic amino acid biosynthesis</keyword>
<keyword id="KW-0413">Isomerase</keyword>
<keyword id="KW-0822">Tryptophan biosynthesis</keyword>
<feature type="chain" id="PRO_1000095946" description="N-(5'-phosphoribosyl)anthranilate isomerase">
    <location>
        <begin position="1"/>
        <end position="203"/>
    </location>
</feature>
<sequence>MVKVKICGLRRKEDIEYANELKPDYVGFVFAKSKRQIEVEQALDLISLLDKEIKTVGVFVNEPVENALKIAQTLNLDVLQFHGDETQDYIDNFKNFTVWKAIRIKDKEDLEKTKEFKVNSFVFDTLTKNEYGGTGKTFNWEVLKGFELNVPIILAGGLNENNVEEAIRIVNPYAVDVSSGVETEGYKDFKKMKSFIEKVRGIR</sequence>
<organism>
    <name type="scientific">Thermoanaerobacter sp. (strain X514)</name>
    <dbReference type="NCBI Taxonomy" id="399726"/>
    <lineage>
        <taxon>Bacteria</taxon>
        <taxon>Bacillati</taxon>
        <taxon>Bacillota</taxon>
        <taxon>Clostridia</taxon>
        <taxon>Thermoanaerobacterales</taxon>
        <taxon>Thermoanaerobacteraceae</taxon>
        <taxon>Thermoanaerobacter</taxon>
    </lineage>
</organism>
<name>TRPF_THEPX</name>
<reference key="1">
    <citation type="submission" date="2008-01" db="EMBL/GenBank/DDBJ databases">
        <title>Complete sequence of Thermoanaerobacter sp. X514.</title>
        <authorList>
            <consortium name="US DOE Joint Genome Institute"/>
            <person name="Copeland A."/>
            <person name="Lucas S."/>
            <person name="Lapidus A."/>
            <person name="Barry K."/>
            <person name="Glavina del Rio T."/>
            <person name="Dalin E."/>
            <person name="Tice H."/>
            <person name="Pitluck S."/>
            <person name="Bruce D."/>
            <person name="Goodwin L."/>
            <person name="Saunders E."/>
            <person name="Brettin T."/>
            <person name="Detter J.C."/>
            <person name="Han C."/>
            <person name="Schmutz J."/>
            <person name="Larimer F."/>
            <person name="Land M."/>
            <person name="Hauser L."/>
            <person name="Kyrpides N."/>
            <person name="Kim E."/>
            <person name="Hemme C."/>
            <person name="Fields M.W."/>
            <person name="He Z."/>
            <person name="Zhou J."/>
            <person name="Richardson P."/>
        </authorList>
    </citation>
    <scope>NUCLEOTIDE SEQUENCE [LARGE SCALE GENOMIC DNA]</scope>
    <source>
        <strain>X514</strain>
    </source>
</reference>
<comment type="catalytic activity">
    <reaction evidence="1">
        <text>N-(5-phospho-beta-D-ribosyl)anthranilate = 1-(2-carboxyphenylamino)-1-deoxy-D-ribulose 5-phosphate</text>
        <dbReference type="Rhea" id="RHEA:21540"/>
        <dbReference type="ChEBI" id="CHEBI:18277"/>
        <dbReference type="ChEBI" id="CHEBI:58613"/>
        <dbReference type="EC" id="5.3.1.24"/>
    </reaction>
</comment>
<comment type="pathway">
    <text evidence="1">Amino-acid biosynthesis; L-tryptophan biosynthesis; L-tryptophan from chorismate: step 3/5.</text>
</comment>
<comment type="similarity">
    <text evidence="1">Belongs to the TrpF family.</text>
</comment>
<evidence type="ECO:0000255" key="1">
    <source>
        <dbReference type="HAMAP-Rule" id="MF_00135"/>
    </source>
</evidence>
<proteinExistence type="inferred from homology"/>